<comment type="function">
    <text evidence="1">Endonuclease IV plays a role in DNA repair. It cleaves phosphodiester bonds at apurinic or apyrimidinic (AP) sites, generating a 3'-hydroxyl group and a 5'-terminal sugar phosphate.</text>
</comment>
<comment type="catalytic activity">
    <reaction evidence="1">
        <text>Endonucleolytic cleavage to 5'-phosphooligonucleotide end-products.</text>
        <dbReference type="EC" id="3.1.21.2"/>
    </reaction>
</comment>
<comment type="cofactor">
    <cofactor evidence="1">
        <name>Zn(2+)</name>
        <dbReference type="ChEBI" id="CHEBI:29105"/>
    </cofactor>
    <text evidence="1">Binds 3 Zn(2+) ions.</text>
</comment>
<comment type="similarity">
    <text evidence="1">Belongs to the AP endonuclease 2 family.</text>
</comment>
<accession>Q97A09</accession>
<feature type="chain" id="PRO_0000190895" description="Probable endonuclease 4">
    <location>
        <begin position="1"/>
        <end position="280"/>
    </location>
</feature>
<feature type="binding site" evidence="1">
    <location>
        <position position="77"/>
    </location>
    <ligand>
        <name>Zn(2+)</name>
        <dbReference type="ChEBI" id="CHEBI:29105"/>
        <label>1</label>
    </ligand>
</feature>
<feature type="binding site" evidence="1">
    <location>
        <position position="117"/>
    </location>
    <ligand>
        <name>Zn(2+)</name>
        <dbReference type="ChEBI" id="CHEBI:29105"/>
        <label>1</label>
    </ligand>
</feature>
<feature type="binding site" evidence="1">
    <location>
        <position position="148"/>
    </location>
    <ligand>
        <name>Zn(2+)</name>
        <dbReference type="ChEBI" id="CHEBI:29105"/>
        <label>1</label>
    </ligand>
</feature>
<feature type="binding site" evidence="1">
    <location>
        <position position="148"/>
    </location>
    <ligand>
        <name>Zn(2+)</name>
        <dbReference type="ChEBI" id="CHEBI:29105"/>
        <label>2</label>
    </ligand>
</feature>
<feature type="binding site" evidence="1">
    <location>
        <position position="180"/>
    </location>
    <ligand>
        <name>Zn(2+)</name>
        <dbReference type="ChEBI" id="CHEBI:29105"/>
        <label>2</label>
    </ligand>
</feature>
<feature type="binding site" evidence="1">
    <location>
        <position position="183"/>
    </location>
    <ligand>
        <name>Zn(2+)</name>
        <dbReference type="ChEBI" id="CHEBI:29105"/>
        <label>3</label>
    </ligand>
</feature>
<feature type="binding site" evidence="1">
    <location>
        <position position="215"/>
    </location>
    <ligand>
        <name>Zn(2+)</name>
        <dbReference type="ChEBI" id="CHEBI:29105"/>
        <label>2</label>
    </ligand>
</feature>
<feature type="binding site" evidence="1">
    <location>
        <position position="228"/>
    </location>
    <ligand>
        <name>Zn(2+)</name>
        <dbReference type="ChEBI" id="CHEBI:29105"/>
        <label>3</label>
    </ligand>
</feature>
<feature type="binding site" evidence="1">
    <location>
        <position position="230"/>
    </location>
    <ligand>
        <name>Zn(2+)</name>
        <dbReference type="ChEBI" id="CHEBI:29105"/>
        <label>3</label>
    </ligand>
</feature>
<feature type="binding site" evidence="1">
    <location>
        <position position="259"/>
    </location>
    <ligand>
        <name>Zn(2+)</name>
        <dbReference type="ChEBI" id="CHEBI:29105"/>
        <label>2</label>
    </ligand>
</feature>
<reference key="1">
    <citation type="journal article" date="2000" name="Proc. Natl. Acad. Sci. U.S.A.">
        <title>Archaeal adaptation to higher temperatures revealed by genomic sequence of Thermoplasma volcanium.</title>
        <authorList>
            <person name="Kawashima T."/>
            <person name="Amano N."/>
            <person name="Koike H."/>
            <person name="Makino S."/>
            <person name="Higuchi S."/>
            <person name="Kawashima-Ohya Y."/>
            <person name="Watanabe K."/>
            <person name="Yamazaki M."/>
            <person name="Kanehori K."/>
            <person name="Kawamoto T."/>
            <person name="Nunoshiba T."/>
            <person name="Yamamoto Y."/>
            <person name="Aramaki H."/>
            <person name="Makino K."/>
            <person name="Suzuki M."/>
        </authorList>
    </citation>
    <scope>NUCLEOTIDE SEQUENCE [LARGE SCALE GENOMIC DNA]</scope>
    <source>
        <strain>ATCC 51530 / DSM 4299 / JCM 9571 / NBRC 15438 / GSS1</strain>
    </source>
</reference>
<dbReference type="EC" id="3.1.21.2" evidence="1"/>
<dbReference type="EMBL" id="BA000011">
    <property type="protein sequence ID" value="BAB60143.1"/>
    <property type="molecule type" value="Genomic_DNA"/>
</dbReference>
<dbReference type="RefSeq" id="WP_010917229.1">
    <property type="nucleotide sequence ID" value="NC_002689.2"/>
</dbReference>
<dbReference type="SMR" id="Q97A09"/>
<dbReference type="STRING" id="273116.gene:9381794"/>
<dbReference type="PaxDb" id="273116-14325218"/>
<dbReference type="GeneID" id="1441111"/>
<dbReference type="KEGG" id="tvo:TVG1022523"/>
<dbReference type="eggNOG" id="arCOG01894">
    <property type="taxonomic scope" value="Archaea"/>
</dbReference>
<dbReference type="HOGENOM" id="CLU_025885_0_4_2"/>
<dbReference type="OrthoDB" id="33250at2157"/>
<dbReference type="PhylomeDB" id="Q97A09"/>
<dbReference type="Proteomes" id="UP000001017">
    <property type="component" value="Chromosome"/>
</dbReference>
<dbReference type="GO" id="GO:0008833">
    <property type="term" value="F:deoxyribonuclease IV (phage-T4-induced) activity"/>
    <property type="evidence" value="ECO:0007669"/>
    <property type="project" value="UniProtKB-UniRule"/>
</dbReference>
<dbReference type="GO" id="GO:0003677">
    <property type="term" value="F:DNA binding"/>
    <property type="evidence" value="ECO:0007669"/>
    <property type="project" value="InterPro"/>
</dbReference>
<dbReference type="GO" id="GO:0003906">
    <property type="term" value="F:DNA-(apurinic or apyrimidinic site) endonuclease activity"/>
    <property type="evidence" value="ECO:0007669"/>
    <property type="project" value="TreeGrafter"/>
</dbReference>
<dbReference type="GO" id="GO:0008081">
    <property type="term" value="F:phosphoric diester hydrolase activity"/>
    <property type="evidence" value="ECO:0007669"/>
    <property type="project" value="TreeGrafter"/>
</dbReference>
<dbReference type="GO" id="GO:0008270">
    <property type="term" value="F:zinc ion binding"/>
    <property type="evidence" value="ECO:0007669"/>
    <property type="project" value="UniProtKB-UniRule"/>
</dbReference>
<dbReference type="GO" id="GO:0006284">
    <property type="term" value="P:base-excision repair"/>
    <property type="evidence" value="ECO:0007669"/>
    <property type="project" value="TreeGrafter"/>
</dbReference>
<dbReference type="CDD" id="cd00019">
    <property type="entry name" value="AP2Ec"/>
    <property type="match status" value="1"/>
</dbReference>
<dbReference type="FunFam" id="3.20.20.150:FF:000001">
    <property type="entry name" value="Probable endonuclease 4"/>
    <property type="match status" value="1"/>
</dbReference>
<dbReference type="Gene3D" id="3.20.20.150">
    <property type="entry name" value="Divalent-metal-dependent TIM barrel enzymes"/>
    <property type="match status" value="1"/>
</dbReference>
<dbReference type="HAMAP" id="MF_00152">
    <property type="entry name" value="Nfo"/>
    <property type="match status" value="1"/>
</dbReference>
<dbReference type="InterPro" id="IPR001719">
    <property type="entry name" value="AP_endonuc_2"/>
</dbReference>
<dbReference type="InterPro" id="IPR018246">
    <property type="entry name" value="AP_endonuc_F2_Zn_BS"/>
</dbReference>
<dbReference type="InterPro" id="IPR036237">
    <property type="entry name" value="Xyl_isomerase-like_sf"/>
</dbReference>
<dbReference type="InterPro" id="IPR013022">
    <property type="entry name" value="Xyl_isomerase-like_TIM-brl"/>
</dbReference>
<dbReference type="NCBIfam" id="TIGR00587">
    <property type="entry name" value="nfo"/>
    <property type="match status" value="1"/>
</dbReference>
<dbReference type="PANTHER" id="PTHR21445:SF0">
    <property type="entry name" value="APURINIC-APYRIMIDINIC ENDONUCLEASE"/>
    <property type="match status" value="1"/>
</dbReference>
<dbReference type="PANTHER" id="PTHR21445">
    <property type="entry name" value="ENDONUCLEASE IV ENDODEOXYRIBONUCLEASE IV"/>
    <property type="match status" value="1"/>
</dbReference>
<dbReference type="Pfam" id="PF01261">
    <property type="entry name" value="AP_endonuc_2"/>
    <property type="match status" value="1"/>
</dbReference>
<dbReference type="SMART" id="SM00518">
    <property type="entry name" value="AP2Ec"/>
    <property type="match status" value="1"/>
</dbReference>
<dbReference type="SUPFAM" id="SSF51658">
    <property type="entry name" value="Xylose isomerase-like"/>
    <property type="match status" value="1"/>
</dbReference>
<dbReference type="PROSITE" id="PS00729">
    <property type="entry name" value="AP_NUCLEASE_F2_1"/>
    <property type="match status" value="1"/>
</dbReference>
<dbReference type="PROSITE" id="PS00730">
    <property type="entry name" value="AP_NUCLEASE_F2_2"/>
    <property type="match status" value="1"/>
</dbReference>
<dbReference type="PROSITE" id="PS00731">
    <property type="entry name" value="AP_NUCLEASE_F2_3"/>
    <property type="match status" value="1"/>
</dbReference>
<dbReference type="PROSITE" id="PS51432">
    <property type="entry name" value="AP_NUCLEASE_F2_4"/>
    <property type="match status" value="1"/>
</dbReference>
<keyword id="KW-0227">DNA damage</keyword>
<keyword id="KW-0234">DNA repair</keyword>
<keyword id="KW-0255">Endonuclease</keyword>
<keyword id="KW-0378">Hydrolase</keyword>
<keyword id="KW-0479">Metal-binding</keyword>
<keyword id="KW-0540">Nuclease</keyword>
<keyword id="KW-0862">Zinc</keyword>
<protein>
    <recommendedName>
        <fullName evidence="1">Probable endonuclease 4</fullName>
        <ecNumber evidence="1">3.1.21.2</ecNumber>
    </recommendedName>
    <alternativeName>
        <fullName evidence="1">Endodeoxyribonuclease IV</fullName>
    </alternativeName>
    <alternativeName>
        <fullName evidence="1">Endonuclease IV</fullName>
    </alternativeName>
</protein>
<gene>
    <name evidence="1" type="primary">nfo</name>
    <name type="ordered locus">TV1001</name>
    <name type="ORF">TVG1022523</name>
</gene>
<name>END4_THEVO</name>
<proteinExistence type="inferred from homology"/>
<evidence type="ECO:0000255" key="1">
    <source>
        <dbReference type="HAMAP-Rule" id="MF_00152"/>
    </source>
</evidence>
<organism>
    <name type="scientific">Thermoplasma volcanium (strain ATCC 51530 / DSM 4299 / JCM 9571 / NBRC 15438 / GSS1)</name>
    <dbReference type="NCBI Taxonomy" id="273116"/>
    <lineage>
        <taxon>Archaea</taxon>
        <taxon>Methanobacteriati</taxon>
        <taxon>Thermoplasmatota</taxon>
        <taxon>Thermoplasmata</taxon>
        <taxon>Thermoplasmatales</taxon>
        <taxon>Thermoplasmataceae</taxon>
        <taxon>Thermoplasma</taxon>
    </lineage>
</organism>
<sequence length="280" mass="31304">MDDDLKSIASKYYIGGHISVSGGLHLAPERASIFGFRTFQFFSKNQMRWNSTPISEEEALRFISEVSSHSISSTMVHASYLINLASSSNELHQKSFNAFVEEIQRAERIDATFLTFHPGSNGNKDEGIRKIKEAIEKVETHKVKLLVENTAGQGNVIGSTIYEIGQIIDGFDSSVGVCIDTCHAWAAGYDITNKYDEFIDELDSAIGLDRIYAFHLNDAMKDLGSNIDRHELIGRGKIGEGLIKLISDVRLFGKPKIMETPYGEAKFEENLKYIRKKLGE</sequence>